<organism>
    <name type="scientific">Arabidopsis thaliana</name>
    <name type="common">Mouse-ear cress</name>
    <dbReference type="NCBI Taxonomy" id="3702"/>
    <lineage>
        <taxon>Eukaryota</taxon>
        <taxon>Viridiplantae</taxon>
        <taxon>Streptophyta</taxon>
        <taxon>Embryophyta</taxon>
        <taxon>Tracheophyta</taxon>
        <taxon>Spermatophyta</taxon>
        <taxon>Magnoliopsida</taxon>
        <taxon>eudicotyledons</taxon>
        <taxon>Gunneridae</taxon>
        <taxon>Pentapetalae</taxon>
        <taxon>rosids</taxon>
        <taxon>malvids</taxon>
        <taxon>Brassicales</taxon>
        <taxon>Brassicaceae</taxon>
        <taxon>Camelineae</taxon>
        <taxon>Arabidopsis</taxon>
    </lineage>
</organism>
<proteinExistence type="evidence at transcript level"/>
<comment type="function">
    <text evidence="1">Pore-forming subunit of a mechanosensitive non-specific cation channel, that conducts both sodium and potassium ions.</text>
</comment>
<comment type="subcellular location">
    <subcellularLocation>
        <location evidence="1">Membrane</location>
        <topology evidence="1">Multi-pass membrane protein</topology>
    </subcellularLocation>
</comment>
<comment type="miscellaneous">
    <text>Piezo comes from the Greek 'piesi' meaning pressure.</text>
</comment>
<comment type="similarity">
    <text evidence="4">Belongs to the PIEZO (TC 1.A.75) family.</text>
</comment>
<comment type="sequence caution" evidence="4">
    <conflict type="erroneous gene model prediction">
        <sequence resource="EMBL-CDS" id="AAD13708"/>
    </conflict>
    <text>Was originally thought to correspond to three different genes At2g48040, At2g48050 and At2g48060.</text>
</comment>
<comment type="sequence caution" evidence="4">
    <conflict type="erroneous gene model prediction">
        <sequence resource="EMBL-CDS" id="AAD13709"/>
    </conflict>
    <text>Was originally thought to correspond to three different genes At2g48040, At2g48050 and At2g48060.</text>
</comment>
<comment type="sequence caution" evidence="4">
    <conflict type="erroneous gene model prediction">
        <sequence resource="EMBL-CDS" id="AAD13714"/>
    </conflict>
    <text>Was originally thought to correspond to three different genes At2g48040, At2g48050 and At2g48060.</text>
</comment>
<protein>
    <recommendedName>
        <fullName>Piezo-type mechanosensitive ion channel homolog</fullName>
    </recommendedName>
</protein>
<evidence type="ECO:0000250" key="1"/>
<evidence type="ECO:0000255" key="2"/>
<evidence type="ECO:0000256" key="3">
    <source>
        <dbReference type="SAM" id="MobiDB-lite"/>
    </source>
</evidence>
<evidence type="ECO:0000305" key="4"/>
<gene>
    <name type="ordered locus">At2g48060/At2g48040/At2g48050</name>
    <name type="ORF">T9J23.21/T9J23.19/T9J23.20</name>
</gene>
<name>PIEZO_ARATH</name>
<reference key="1">
    <citation type="journal article" date="1999" name="Nature">
        <title>Sequence and analysis of chromosome 2 of the plant Arabidopsis thaliana.</title>
        <authorList>
            <person name="Lin X."/>
            <person name="Kaul S."/>
            <person name="Rounsley S.D."/>
            <person name="Shea T.P."/>
            <person name="Benito M.-I."/>
            <person name="Town C.D."/>
            <person name="Fujii C.Y."/>
            <person name="Mason T.M."/>
            <person name="Bowman C.L."/>
            <person name="Barnstead M.E."/>
            <person name="Feldblyum T.V."/>
            <person name="Buell C.R."/>
            <person name="Ketchum K.A."/>
            <person name="Lee J.J."/>
            <person name="Ronning C.M."/>
            <person name="Koo H.L."/>
            <person name="Moffat K.S."/>
            <person name="Cronin L.A."/>
            <person name="Shen M."/>
            <person name="Pai G."/>
            <person name="Van Aken S."/>
            <person name="Umayam L."/>
            <person name="Tallon L.J."/>
            <person name="Gill J.E."/>
            <person name="Adams M.D."/>
            <person name="Carrera A.J."/>
            <person name="Creasy T.H."/>
            <person name="Goodman H.M."/>
            <person name="Somerville C.R."/>
            <person name="Copenhaver G.P."/>
            <person name="Preuss D."/>
            <person name="Nierman W.C."/>
            <person name="White O."/>
            <person name="Eisen J.A."/>
            <person name="Salzberg S.L."/>
            <person name="Fraser C.M."/>
            <person name="Venter J.C."/>
        </authorList>
    </citation>
    <scope>NUCLEOTIDE SEQUENCE [LARGE SCALE GENOMIC DNA]</scope>
    <source>
        <strain>cv. Columbia</strain>
    </source>
</reference>
<reference key="2">
    <citation type="journal article" date="2017" name="Plant J.">
        <title>Araport11: a complete reannotation of the Arabidopsis thaliana reference genome.</title>
        <authorList>
            <person name="Cheng C.Y."/>
            <person name="Krishnakumar V."/>
            <person name="Chan A.P."/>
            <person name="Thibaud-Nissen F."/>
            <person name="Schobel S."/>
            <person name="Town C.D."/>
        </authorList>
    </citation>
    <scope>GENOME REANNOTATION</scope>
    <source>
        <strain>cv. Columbia</strain>
    </source>
</reference>
<reference key="3">
    <citation type="journal article" date="2002" name="Plant Physiol.">
        <title>Cloning and sequencing of cDNAs for hypothetical genes from chromosome 2 of Arabidopsis.</title>
        <authorList>
            <person name="Xiao Y.-L."/>
            <person name="Malik M."/>
            <person name="Whitelaw C.A."/>
            <person name="Town C.D."/>
        </authorList>
    </citation>
    <scope>NUCLEOTIDE SEQUENCE [LARGE SCALE MRNA] OF 1-339 AND 502-707</scope>
    <source>
        <strain>cv. Columbia</strain>
    </source>
</reference>
<feature type="chain" id="PRO_0000430288" description="Piezo-type mechanosensitive ion channel homolog">
    <location>
        <begin position="1"/>
        <end position="2462"/>
    </location>
</feature>
<feature type="transmembrane region" description="Helical; Name=1" evidence="2">
    <location>
        <begin position="5"/>
        <end position="25"/>
    </location>
</feature>
<feature type="transmembrane region" description="Helical; Name=2" evidence="2">
    <location>
        <begin position="27"/>
        <end position="47"/>
    </location>
</feature>
<feature type="transmembrane region" description="Helical; Name=3" evidence="2">
    <location>
        <begin position="57"/>
        <end position="77"/>
    </location>
</feature>
<feature type="transmembrane region" description="Helical; Name=4" evidence="2">
    <location>
        <begin position="105"/>
        <end position="125"/>
    </location>
</feature>
<feature type="transmembrane region" description="Helical; Name=5" evidence="2">
    <location>
        <begin position="163"/>
        <end position="183"/>
    </location>
</feature>
<feature type="transmembrane region" description="Helical; Name=6" evidence="2">
    <location>
        <begin position="207"/>
        <end position="227"/>
    </location>
</feature>
<feature type="transmembrane region" description="Helical; Name=7" evidence="2">
    <location>
        <begin position="248"/>
        <end position="268"/>
    </location>
</feature>
<feature type="transmembrane region" description="Helical; Name=8" evidence="2">
    <location>
        <begin position="325"/>
        <end position="345"/>
    </location>
</feature>
<feature type="transmembrane region" description="Helical; Name=9" evidence="2">
    <location>
        <begin position="347"/>
        <end position="367"/>
    </location>
</feature>
<feature type="transmembrane region" description="Helical; Name=10" evidence="2">
    <location>
        <begin position="374"/>
        <end position="394"/>
    </location>
</feature>
<feature type="transmembrane region" description="Helical; Name=11" evidence="2">
    <location>
        <begin position="404"/>
        <end position="424"/>
    </location>
</feature>
<feature type="transmembrane region" description="Helical; Name=12" evidence="2">
    <location>
        <begin position="467"/>
        <end position="487"/>
    </location>
</feature>
<feature type="transmembrane region" description="Helical; Name=13" evidence="2">
    <location>
        <begin position="502"/>
        <end position="522"/>
    </location>
</feature>
<feature type="transmembrane region" description="Helical; Name=14" evidence="2">
    <location>
        <begin position="554"/>
        <end position="574"/>
    </location>
</feature>
<feature type="transmembrane region" description="Helical; Name=15" evidence="2">
    <location>
        <begin position="653"/>
        <end position="673"/>
    </location>
</feature>
<feature type="transmembrane region" description="Helical; Name=16" evidence="2">
    <location>
        <begin position="694"/>
        <end position="714"/>
    </location>
</feature>
<feature type="transmembrane region" description="Helical; Name=17" evidence="2">
    <location>
        <begin position="730"/>
        <end position="750"/>
    </location>
</feature>
<feature type="transmembrane region" description="Helical; Name=18" evidence="2">
    <location>
        <begin position="792"/>
        <end position="812"/>
    </location>
</feature>
<feature type="transmembrane region" description="Helical; Name=19" evidence="2">
    <location>
        <begin position="826"/>
        <end position="846"/>
    </location>
</feature>
<feature type="transmembrane region" description="Helical; Name=20" evidence="2">
    <location>
        <begin position="1027"/>
        <end position="1047"/>
    </location>
</feature>
<feature type="transmembrane region" description="Helical; Name=21" evidence="2">
    <location>
        <begin position="1050"/>
        <end position="1070"/>
    </location>
</feature>
<feature type="transmembrane region" description="Helical; Name=22" evidence="2">
    <location>
        <begin position="1078"/>
        <end position="1098"/>
    </location>
</feature>
<feature type="transmembrane region" description="Helical; Name=23" evidence="2">
    <location>
        <begin position="1143"/>
        <end position="1160"/>
    </location>
</feature>
<feature type="transmembrane region" description="Helical; Name=24" evidence="2">
    <location>
        <begin position="1204"/>
        <end position="1224"/>
    </location>
</feature>
<feature type="transmembrane region" description="Helical; Name=25" evidence="2">
    <location>
        <begin position="1228"/>
        <end position="1248"/>
    </location>
</feature>
<feature type="transmembrane region" description="Helical; Name=26" evidence="2">
    <location>
        <begin position="1260"/>
        <end position="1280"/>
    </location>
</feature>
<feature type="transmembrane region" description="Helical; Name=27" evidence="2">
    <location>
        <begin position="1310"/>
        <end position="1330"/>
    </location>
</feature>
<feature type="transmembrane region" description="Helical; Name=28" evidence="2">
    <location>
        <begin position="1611"/>
        <end position="1631"/>
    </location>
</feature>
<feature type="transmembrane region" description="Helical; Name=29" evidence="2">
    <location>
        <begin position="1647"/>
        <end position="1667"/>
    </location>
</feature>
<feature type="transmembrane region" description="Helical; Name=30" evidence="2">
    <location>
        <begin position="1916"/>
        <end position="1936"/>
    </location>
</feature>
<feature type="transmembrane region" description="Helical; Name=31" evidence="2">
    <location>
        <begin position="1956"/>
        <end position="1976"/>
    </location>
</feature>
<feature type="transmembrane region" description="Helical; Name=32" evidence="2">
    <location>
        <begin position="1984"/>
        <end position="2004"/>
    </location>
</feature>
<feature type="transmembrane region" description="Helical; Name=33" evidence="2">
    <location>
        <begin position="2012"/>
        <end position="2032"/>
    </location>
</feature>
<feature type="transmembrane region" description="Helical; Name=34" evidence="2">
    <location>
        <begin position="2130"/>
        <end position="2150"/>
    </location>
</feature>
<feature type="transmembrane region" description="Helical; Name=35" evidence="2">
    <location>
        <begin position="2369"/>
        <end position="2389"/>
    </location>
</feature>
<feature type="region of interest" description="Disordered" evidence="3">
    <location>
        <begin position="927"/>
        <end position="947"/>
    </location>
</feature>
<feature type="region of interest" description="Disordered" evidence="3">
    <location>
        <begin position="1543"/>
        <end position="1583"/>
    </location>
</feature>
<feature type="coiled-coil region" evidence="2">
    <location>
        <begin position="1347"/>
        <end position="1400"/>
    </location>
</feature>
<feature type="compositionally biased region" description="Low complexity" evidence="3">
    <location>
        <begin position="928"/>
        <end position="939"/>
    </location>
</feature>
<feature type="compositionally biased region" description="Acidic residues" evidence="3">
    <location>
        <begin position="1550"/>
        <end position="1559"/>
    </location>
</feature>
<feature type="compositionally biased region" description="Polar residues" evidence="3">
    <location>
        <begin position="1570"/>
        <end position="1583"/>
    </location>
</feature>
<feature type="sequence conflict" description="In Ref. 3; AY461629." evidence="4" ref="3">
    <original>W</original>
    <variation>R</variation>
    <location>
        <position position="22"/>
    </location>
</feature>
<feature type="sequence conflict" description="In Ref. 3; AY461629." evidence="4" ref="3">
    <original>F</original>
    <variation>V</variation>
    <location>
        <position position="318"/>
    </location>
</feature>
<sequence>MASFLVGFLLPSLLLAAALINWSVISFLDLIAFLLVHYIAPEIGYRFQRRHWLLWPIFIFSFAVFLAQVVYLVIWAALGQDWDTPDTGWMRVIGFMILKSWRNPTVMYFLALQLLTSLVALADIYSSRFGFARWRDTWWSHFSGIFEHLGSHLRVASCLLLPAVQLAVGICNPSWVSLPFFIGSCAGLVDWSLTSNVSGLFRWWRVLYIYAGFNIVLLYLYQLPINFSDMIRWIASFIGLFRISLETEGPDICSGLFLVLFYIMLSYVRSDLEDMDFIMSTSENNLAERLLPPKYSFFIRESRAGVRHTNVLLRGAVFKTFSINFFTYGFPVSLFALSFWSFHFASLCAFGLLAYVGYIIYAFPSLFQLHRLNGLLLVFILLWAVSTYIFNVAFSFLNTKVGKFGLGMLVALGNLVNNSVFLYLSEESSRSSNERSYVEADEETKVLVVATIAWGLRKCSRAIMLALIFLIAMKPGFFHAVYVIFFLMYLLSHNINRKIRKSLILLCEVHFALLYILEIDLVSNSLKQEGSASREVLFQLGLLRSESSWDFLEIALLACFCAIHNHGFEVLFSFSAIVRHTPSPPIGFSILKAGLNKSVLLSVYSSPSSSYSQDNTTYERHIASFLSAIGQKFLSMYRSCGTYIAFITILISVYLVKPNYVSFGYIFLLLLWITGRQLFEETKRRLWFPLKAYAVLVFMFIYCLSSFVSLQLWLSGFIDLYFYLGYNSKAPLLDNVWESLAVLIVMQLYSYERRQSGHYIPGQSSLLHPGVFGFFERFLAWHGQKILFAALFYASLSPISVFGFVYLLGLVICTTFPKSSSIPSKSFLIYTGFLVSAEYLFQLWGMQAQMFPGQKYAELSFYLGLRVYEPGFWGIESGLRGKVLVVAACTLQYNVFRWLERTSGLTVIKGKYEEPCPLFVSAEDTTASVSSSNGENPSSTDHASISMKQGEATSNSWPFFSPRGNQGAGFLHPKTGGSESGSSRKFSFGHFWGSIKESHRWNRRRILALKKERFETQKNLLKIYLKFWIENMFNLYGLEINMIALLLASFALLNAISMVYIALLAACVLLRRRVIQKLWPVVVFLFASILAIEYVATWNSFLPSDQAPSETSVHCHDCWSIAALYFKFCRECWLGVRVDDPRTLISYFVVFMLACFKLRADHISSFSESSTYHQMKSQRKNSFVWRDLSFETKSMWTVLDYLRLYCYVHLLDVVLILILITGTLEYDILHLGYLAFALVFARMRLEILKKKNKIFRFLRVYNFVLIIFSLAYQSPFVGNFNDGKCETVDYIYEVIGFYKYDYGFRITARSALVEIIIFMLVSLQSYMFSSQEFDYVSRYLEAEQIGAIVREQEKKAARKTEQLQQIREAEEKKRQRNLQVEKMKSEMLNLRVQLHRMNSDSNFGVASPRTEGLRRRKSPYLIPDSGAASPEIDGVVHRKEEQPIDEDSQYPFEAHEFPVSTTPEALDSPEYSFGASPCEITEVQQDLDVMSMERERKQKSEGKENPLISAVQLIGDGVSQVQFIGNQAVNNLVNFLNISPENSDTNEQSSVDDEVYDEMESQKRKHTPFERSTSLQSDRSSDGTSFQIGRIFRHIWSRMQSNNDIVCYCCFIIAFLWNFSLLSMVYLAALFLYALCVHTGPTHIFWVIMLMYTEIYILLQYLYQIIIQHCGLSIDAPLLHELGFPTQRIKSSFVVSSLPLFLIYIFTLIQSSITVKDGDWVPSADFTSRRNARGSQKDLTRIRLSQRILDVFKKLRDSAKLVIRSIYRYWISLTRGAESPPYFVQVTMDVHMWPEDGIQPERVECRMNQLLRLVHNERCEKGNPDLCPYSSRVHVQSIERSTETPNEALVVLEVEYASPTNGCSSAEWYKSLTPASDVAKEIRKAQHSGLGEGTGFPYPILSVIGGGKRDTDLYAYIFGADLIVFFLVAIFYQSVIKNKSEFIDVYQLEDQFPFDFVIILMVIFFLIVVDRVIYLCSFATGKVVYYLFSLILFTYAVTEYAWSIYPTQQHAAGLALRIIFLAKAMSLALQAIQIRYGLPHKSTLYRQFLTSEVSRINYYGYRLYRALPFLYELRCVLDWSCTATSLTMYDWLKLEDVNASLYLVKCDTVLNRATHKHGEKQTKMTKCCNGICLFFILLCVIWAPMLMYSSGNPTNIANPIKDASVQIDLKTVGGKLTLYQTTLCERISGDNIDLGLDLGSQSFLPTYNKNDIQLICCQADASVLWLVPDTVVTRFIQSLDWDTDMDITFTWVLNRDRPKGKETVKYERSVDPLDLPKRSDIQMVLNGSMDGFRVHNLYPKFFRVTGSGDVRSFEDQTDEVSADILINHANFKWWWSFHNLKASENISACEGMDGPVAIIMSEETPPQGFLGDTLSKFSIWGLYITFVLAVGRFIRLQCSDLRMRIPYENLPSCDRLIAICEDLYAARAEGELGVEEVLYWTLVKIYRSPHMLLEYTKLDYDA</sequence>
<accession>F4IN58</accession>
<accession>Q9ZU83</accession>
<accession>Q9ZU84</accession>
<accession>Q9ZU85</accession>
<dbReference type="EMBL" id="AC006072">
    <property type="protein sequence ID" value="AAD13708.1"/>
    <property type="status" value="ALT_SEQ"/>
    <property type="molecule type" value="Genomic_DNA"/>
</dbReference>
<dbReference type="EMBL" id="AC006072">
    <property type="protein sequence ID" value="AAD13709.1"/>
    <property type="status" value="ALT_SEQ"/>
    <property type="molecule type" value="Genomic_DNA"/>
</dbReference>
<dbReference type="EMBL" id="AC006072">
    <property type="protein sequence ID" value="AAD13714.1"/>
    <property type="status" value="ALT_SEQ"/>
    <property type="molecule type" value="Genomic_DNA"/>
</dbReference>
<dbReference type="EMBL" id="CP002685">
    <property type="protein sequence ID" value="AEC10927.1"/>
    <property type="molecule type" value="Genomic_DNA"/>
</dbReference>
<dbReference type="EMBL" id="AY461629">
    <property type="status" value="NOT_ANNOTATED_CDS"/>
    <property type="molecule type" value="mRNA"/>
</dbReference>
<dbReference type="EMBL" id="AY461630">
    <property type="status" value="NOT_ANNOTATED_CDS"/>
    <property type="molecule type" value="mRNA"/>
</dbReference>
<dbReference type="PIR" id="F84922">
    <property type="entry name" value="F84922"/>
</dbReference>
<dbReference type="PIR" id="G84922">
    <property type="entry name" value="G84922"/>
</dbReference>
<dbReference type="PIR" id="H84922">
    <property type="entry name" value="H84922"/>
</dbReference>
<dbReference type="RefSeq" id="NP_182327.6">
    <property type="nucleotide sequence ID" value="NM_130373.6"/>
</dbReference>
<dbReference type="SMR" id="F4IN58"/>
<dbReference type="FunCoup" id="F4IN58">
    <property type="interactions" value="828"/>
</dbReference>
<dbReference type="STRING" id="3702.F4IN58"/>
<dbReference type="TCDB" id="1.A.75.1.4">
    <property type="family name" value="the mechanical nociceptor, piezo (piezo) family"/>
</dbReference>
<dbReference type="iPTMnet" id="F4IN58"/>
<dbReference type="PaxDb" id="3702-AT2G48060.1"/>
<dbReference type="EnsemblPlants" id="AT2G48060.1">
    <property type="protein sequence ID" value="AT2G48060.1"/>
    <property type="gene ID" value="AT2G48060"/>
</dbReference>
<dbReference type="Gramene" id="AT2G48060.1">
    <property type="protein sequence ID" value="AT2G48060.1"/>
    <property type="gene ID" value="AT2G48060"/>
</dbReference>
<dbReference type="KEGG" id="ath:AT2G48060"/>
<dbReference type="Araport" id="AT2G48060"/>
<dbReference type="TAIR" id="AT2G48060"/>
<dbReference type="eggNOG" id="KOG1893">
    <property type="taxonomic scope" value="Eukaryota"/>
</dbReference>
<dbReference type="HOGENOM" id="CLU_000444_0_0_1"/>
<dbReference type="InParanoid" id="F4IN58"/>
<dbReference type="PRO" id="PR:F4IN58"/>
<dbReference type="Proteomes" id="UP000006548">
    <property type="component" value="Chromosome 2"/>
</dbReference>
<dbReference type="ExpressionAtlas" id="F4IN58">
    <property type="expression patterns" value="baseline and differential"/>
</dbReference>
<dbReference type="GO" id="GO:0016020">
    <property type="term" value="C:membrane"/>
    <property type="evidence" value="ECO:0007669"/>
    <property type="project" value="UniProtKB-SubCell"/>
</dbReference>
<dbReference type="GO" id="GO:0005634">
    <property type="term" value="C:nucleus"/>
    <property type="evidence" value="ECO:0000314"/>
    <property type="project" value="TAIR"/>
</dbReference>
<dbReference type="GO" id="GO:0008381">
    <property type="term" value="F:mechanosensitive monoatomic ion channel activity"/>
    <property type="evidence" value="ECO:0007669"/>
    <property type="project" value="InterPro"/>
</dbReference>
<dbReference type="GO" id="GO:0050982">
    <property type="term" value="P:detection of mechanical stimulus"/>
    <property type="evidence" value="ECO:0000315"/>
    <property type="project" value="TAIR"/>
</dbReference>
<dbReference type="InterPro" id="IPR027272">
    <property type="entry name" value="Piezo"/>
</dbReference>
<dbReference type="InterPro" id="IPR031334">
    <property type="entry name" value="Piezo_cap_dom"/>
</dbReference>
<dbReference type="InterPro" id="IPR056770">
    <property type="entry name" value="Piezo_THU9_anchor"/>
</dbReference>
<dbReference type="InterPro" id="IPR056768">
    <property type="entry name" value="THU_Piezo"/>
</dbReference>
<dbReference type="PANTHER" id="PTHR13167">
    <property type="entry name" value="PIEZO-TYPE MECHANOSENSITIVE ION CHANNEL COMPONENT"/>
    <property type="match status" value="1"/>
</dbReference>
<dbReference type="PANTHER" id="PTHR13167:SF25">
    <property type="entry name" value="PIEZO-TYPE MECHANOSENSITIVE ION CHANNEL COMPONENT"/>
    <property type="match status" value="1"/>
</dbReference>
<dbReference type="Pfam" id="PF25288">
    <property type="entry name" value="PIEZO"/>
    <property type="match status" value="1"/>
</dbReference>
<dbReference type="Pfam" id="PF12166">
    <property type="entry name" value="Piezo_cap"/>
    <property type="match status" value="1"/>
</dbReference>
<dbReference type="Pfam" id="PF24874">
    <property type="entry name" value="Piezo_THU9_anchor"/>
    <property type="match status" value="1"/>
</dbReference>
<dbReference type="Pfam" id="PF23188">
    <property type="entry name" value="THU_Piezo1"/>
    <property type="match status" value="1"/>
</dbReference>
<keyword id="KW-0175">Coiled coil</keyword>
<keyword id="KW-0407">Ion channel</keyword>
<keyword id="KW-0406">Ion transport</keyword>
<keyword id="KW-0472">Membrane</keyword>
<keyword id="KW-1185">Reference proteome</keyword>
<keyword id="KW-0812">Transmembrane</keyword>
<keyword id="KW-1133">Transmembrane helix</keyword>
<keyword id="KW-0813">Transport</keyword>